<accession>O77512</accession>
<accession>O62832</accession>
<accession>Q9T2T9</accession>
<evidence type="ECO:0000250" key="1">
    <source>
        <dbReference type="UniProtKB" id="Q5FW57"/>
    </source>
</evidence>
<evidence type="ECO:0000269" key="2">
    <source>
    </source>
</evidence>
<evidence type="ECO:0000305" key="3"/>
<keyword id="KW-0007">Acetylation</keyword>
<keyword id="KW-0012">Acyltransferase</keyword>
<keyword id="KW-0903">Direct protein sequencing</keyword>
<keyword id="KW-0496">Mitochondrion</keyword>
<keyword id="KW-1185">Reference proteome</keyword>
<keyword id="KW-0808">Transferase</keyword>
<organism>
    <name type="scientific">Bos taurus</name>
    <name type="common">Bovine</name>
    <dbReference type="NCBI Taxonomy" id="9913"/>
    <lineage>
        <taxon>Eukaryota</taxon>
        <taxon>Metazoa</taxon>
        <taxon>Chordata</taxon>
        <taxon>Craniata</taxon>
        <taxon>Vertebrata</taxon>
        <taxon>Euteleostomi</taxon>
        <taxon>Mammalia</taxon>
        <taxon>Eutheria</taxon>
        <taxon>Laurasiatheria</taxon>
        <taxon>Artiodactyla</taxon>
        <taxon>Ruminantia</taxon>
        <taxon>Pecora</taxon>
        <taxon>Bovidae</taxon>
        <taxon>Bovinae</taxon>
        <taxon>Bos</taxon>
    </lineage>
</organism>
<sequence length="295" mass="33684">MFHLQGPQLLQMLEKSLRKSLPESLKVYGTVFHMNQGNPFNLKALVDKWPDFKTVVIRPQEQEMADDFDHYTNTYQIYSKDLNNCQESLATSDVINWKQHLQIQSSQSSLNEVVQNLAATKFVKVEHTQCILYVMPETARKLLPSLPETKNLPVGYGAPKAINQEMFKLSSMDPTHAALVNKFWHFGGNERSQRFIERCIRAFPTFCLLGPEGTPASWSLMDQTGEIRMGATLPEYRGHGLISHMLAVHTRALDQLGIPVYNHTDKANKIVQKVSHNLHHIAIPHGWNQWNCEPL</sequence>
<comment type="function">
    <text>Mitochondrial acyltransferase which transfers the acyl group to the N-terminus of glycine. Can conjugate a multitude of substrates to form a variety of N-acylglycines. Catalyzes the conjugation of arylacetic acids with glycine but does not have activity towards any alkyl-CoA.</text>
</comment>
<comment type="catalytic activity">
    <reaction evidence="2">
        <text>phenylacetyl-CoA + glycine = phenylacetylglycine + CoA + H(+)</text>
        <dbReference type="Rhea" id="RHEA:27850"/>
        <dbReference type="ChEBI" id="CHEBI:15378"/>
        <dbReference type="ChEBI" id="CHEBI:57287"/>
        <dbReference type="ChEBI" id="CHEBI:57305"/>
        <dbReference type="ChEBI" id="CHEBI:57390"/>
        <dbReference type="ChEBI" id="CHEBI:60874"/>
        <dbReference type="EC" id="2.3.1.192"/>
    </reaction>
</comment>
<comment type="subcellular location">
    <subcellularLocation>
        <location evidence="2">Mitochondrion</location>
    </subcellularLocation>
</comment>
<comment type="similarity">
    <text evidence="3">Belongs to the glycine N-acyltransferase family.</text>
</comment>
<protein>
    <recommendedName>
        <fullName>Glycine N-phenylacetyltransferase</fullName>
        <ecNumber>2.3.1.192</ecNumber>
    </recommendedName>
    <alternativeName>
        <fullName>ArAlk</fullName>
    </alternativeName>
    <alternativeName>
        <fullName>Arylacetyl-CoA N-acyltransferase</fullName>
        <shortName>Arylacetyltransferase</shortName>
    </alternativeName>
    <alternativeName>
        <fullName>Arylacetyl-CoA:amino acid N-acyltransferase</fullName>
    </alternativeName>
</protein>
<proteinExistence type="evidence at protein level"/>
<name>GLYAL_BOVIN</name>
<dbReference type="EC" id="2.3.1.192"/>
<dbReference type="EMBL" id="AJ001396">
    <property type="protein sequence ID" value="CAA04726.1"/>
    <property type="molecule type" value="Genomic_DNA"/>
</dbReference>
<dbReference type="EMBL" id="AF022073">
    <property type="protein sequence ID" value="AAC33282.1"/>
    <property type="molecule type" value="mRNA"/>
</dbReference>
<dbReference type="PIR" id="S27170">
    <property type="entry name" value="S27170"/>
</dbReference>
<dbReference type="RefSeq" id="NP_803452.1">
    <property type="nucleotide sequence ID" value="NM_177486.2"/>
</dbReference>
<dbReference type="RefSeq" id="XP_005216632.1">
    <property type="nucleotide sequence ID" value="XM_005216575.3"/>
</dbReference>
<dbReference type="RefSeq" id="XP_059730531.1">
    <property type="nucleotide sequence ID" value="XM_059874548.1"/>
</dbReference>
<dbReference type="SMR" id="O77512"/>
<dbReference type="FunCoup" id="O77512">
    <property type="interactions" value="32"/>
</dbReference>
<dbReference type="STRING" id="9913.ENSBTAP00000060343"/>
<dbReference type="PaxDb" id="9913-ENSBTAP00000038681"/>
<dbReference type="PeptideAtlas" id="O77512"/>
<dbReference type="Ensembl" id="ENSBTAT00000073288.1">
    <property type="protein sequence ID" value="ENSBTAP00000060343.1"/>
    <property type="gene ID" value="ENSBTAG00000052095.2"/>
</dbReference>
<dbReference type="GeneID" id="280801"/>
<dbReference type="KEGG" id="bta:280801"/>
<dbReference type="CTD" id="43805"/>
<dbReference type="VEuPathDB" id="HostDB:ENSBTAG00000052095"/>
<dbReference type="eggNOG" id="ENOG502SDQB">
    <property type="taxonomic scope" value="Eukaryota"/>
</dbReference>
<dbReference type="GeneTree" id="ENSGT00950000183133"/>
<dbReference type="HOGENOM" id="CLU_060336_0_0_1"/>
<dbReference type="InParanoid" id="O77512"/>
<dbReference type="OMA" id="CHMMILE"/>
<dbReference type="OrthoDB" id="61870at2759"/>
<dbReference type="TreeFam" id="TF353258"/>
<dbReference type="Proteomes" id="UP000009136">
    <property type="component" value="Chromosome 15"/>
</dbReference>
<dbReference type="Bgee" id="ENSBTAG00000052095">
    <property type="expression patterns" value="Expressed in cortex of kidney and 60 other cell types or tissues"/>
</dbReference>
<dbReference type="GO" id="GO:0005739">
    <property type="term" value="C:mitochondrion"/>
    <property type="evidence" value="ECO:0000250"/>
    <property type="project" value="UniProtKB"/>
</dbReference>
<dbReference type="GO" id="GO:0047961">
    <property type="term" value="F:glycine N-acyltransferase activity"/>
    <property type="evidence" value="ECO:0007669"/>
    <property type="project" value="InterPro"/>
</dbReference>
<dbReference type="GO" id="GO:0016410">
    <property type="term" value="F:N-acyltransferase activity"/>
    <property type="evidence" value="ECO:0000318"/>
    <property type="project" value="GO_Central"/>
</dbReference>
<dbReference type="GO" id="GO:0102080">
    <property type="term" value="F:phenylacetyl-coenzyme A:glycine N-acyltransferase activity"/>
    <property type="evidence" value="ECO:0007669"/>
    <property type="project" value="UniProtKB-EC"/>
</dbReference>
<dbReference type="FunFam" id="3.40.630.30:FF:000075">
    <property type="entry name" value="Glycine N-acyltransferase"/>
    <property type="match status" value="1"/>
</dbReference>
<dbReference type="Gene3D" id="3.40.630.30">
    <property type="match status" value="1"/>
</dbReference>
<dbReference type="InterPro" id="IPR016181">
    <property type="entry name" value="Acyl_CoA_acyltransferase"/>
</dbReference>
<dbReference type="InterPro" id="IPR010313">
    <property type="entry name" value="Glycine_N-acyltransferase"/>
</dbReference>
<dbReference type="InterPro" id="IPR013652">
    <property type="entry name" value="Glycine_N-acyltransferase_C"/>
</dbReference>
<dbReference type="InterPro" id="IPR015938">
    <property type="entry name" value="Glycine_N-acyltransferase_N"/>
</dbReference>
<dbReference type="PANTHER" id="PTHR15298:SF11">
    <property type="entry name" value="GLYCINE N-ACYLTRANSFERASE-LIKE PROTEIN"/>
    <property type="match status" value="1"/>
</dbReference>
<dbReference type="PANTHER" id="PTHR15298">
    <property type="entry name" value="L-COA N-ACYLTRANSFERASE-RELATED"/>
    <property type="match status" value="1"/>
</dbReference>
<dbReference type="Pfam" id="PF08444">
    <property type="entry name" value="Gly_acyl_tr_C"/>
    <property type="match status" value="1"/>
</dbReference>
<dbReference type="Pfam" id="PF06021">
    <property type="entry name" value="Gly_acyl_tr_N"/>
    <property type="match status" value="1"/>
</dbReference>
<dbReference type="SUPFAM" id="SSF55729">
    <property type="entry name" value="Acyl-CoA N-acyltransferases (Nat)"/>
    <property type="match status" value="1"/>
</dbReference>
<feature type="chain" id="PRO_0000281873" description="Glycine N-phenylacetyltransferase">
    <location>
        <begin position="1"/>
        <end position="295"/>
    </location>
</feature>
<feature type="modified residue" description="N6-acetyllysine" evidence="1">
    <location>
        <position position="43"/>
    </location>
</feature>
<feature type="modified residue" description="N6-acetyllysine; alternate" evidence="1">
    <location>
        <position position="48"/>
    </location>
</feature>
<feature type="modified residue" description="N6-succinyllysine; alternate" evidence="1">
    <location>
        <position position="48"/>
    </location>
</feature>
<feature type="modified residue" description="N6-acetyllysine" evidence="1">
    <location>
        <position position="80"/>
    </location>
</feature>
<feature type="modified residue" description="N6-acetyllysine; alternate" evidence="1">
    <location>
        <position position="182"/>
    </location>
</feature>
<feature type="modified residue" description="N6-succinyllysine; alternate" evidence="1">
    <location>
        <position position="182"/>
    </location>
</feature>
<reference key="1">
    <citation type="journal article" date="1998" name="J. Biochem. Mol. Toxicol.">
        <title>Determination of the sequence of the arylacetyl acyl-CoA:amino acid N-acyltransferase from bovine liver mitochondria and its homology to the aralkyl acyl-CoA:amino acid N-acyltransferase.</title>
        <authorList>
            <person name="Vessey D.A."/>
            <person name="Lau E."/>
        </authorList>
    </citation>
    <scope>NUCLEOTIDE SEQUENCE [GENOMIC DNA / MRNA]</scope>
    <scope>PROTEIN SEQUENCE OF 229-260</scope>
    <source>
        <tissue>Liver</tissue>
    </source>
</reference>
<reference key="2">
    <citation type="journal article" date="1992" name="Biochem. J.">
        <title>Structural comparison between the mitochondrial aralkyl-CoA and arylacetyl-CoA N-acyltransferases.</title>
        <authorList>
            <person name="Kelley M."/>
            <person name="Vessey D.A."/>
        </authorList>
    </citation>
    <scope>PROTEIN SEQUENCE OF 64-89</scope>
    <scope>CATALYTIC ACTIVITY</scope>
    <scope>SUBCELLULAR LOCATION</scope>
    <source>
        <tissue>Liver</tissue>
    </source>
</reference>